<organism>
    <name type="scientific">Drosophila pseudoobscura pseudoobscura</name>
    <name type="common">Fruit fly</name>
    <dbReference type="NCBI Taxonomy" id="46245"/>
    <lineage>
        <taxon>Eukaryota</taxon>
        <taxon>Metazoa</taxon>
        <taxon>Ecdysozoa</taxon>
        <taxon>Arthropoda</taxon>
        <taxon>Hexapoda</taxon>
        <taxon>Insecta</taxon>
        <taxon>Pterygota</taxon>
        <taxon>Neoptera</taxon>
        <taxon>Endopterygota</taxon>
        <taxon>Diptera</taxon>
        <taxon>Brachycera</taxon>
        <taxon>Muscomorpha</taxon>
        <taxon>Ephydroidea</taxon>
        <taxon>Drosophilidae</taxon>
        <taxon>Drosophila</taxon>
        <taxon>Sophophora</taxon>
    </lineage>
</organism>
<reference key="1">
    <citation type="journal article" date="2005" name="Genome Res.">
        <title>Comparative genome sequencing of Drosophila pseudoobscura: chromosomal, gene, and cis-element evolution.</title>
        <authorList>
            <person name="Richards S."/>
            <person name="Liu Y."/>
            <person name="Bettencourt B.R."/>
            <person name="Hradecky P."/>
            <person name="Letovsky S."/>
            <person name="Nielsen R."/>
            <person name="Thornton K."/>
            <person name="Hubisz M.J."/>
            <person name="Chen R."/>
            <person name="Meisel R.P."/>
            <person name="Couronne O."/>
            <person name="Hua S."/>
            <person name="Smith M.A."/>
            <person name="Zhang P."/>
            <person name="Liu J."/>
            <person name="Bussemaker H.J."/>
            <person name="van Batenburg M.F."/>
            <person name="Howells S.L."/>
            <person name="Scherer S.E."/>
            <person name="Sodergren E."/>
            <person name="Matthews B.B."/>
            <person name="Crosby M.A."/>
            <person name="Schroeder A.J."/>
            <person name="Ortiz-Barrientos D."/>
            <person name="Rives C.M."/>
            <person name="Metzker M.L."/>
            <person name="Muzny D.M."/>
            <person name="Scott G."/>
            <person name="Steffen D."/>
            <person name="Wheeler D.A."/>
            <person name="Worley K.C."/>
            <person name="Havlak P."/>
            <person name="Durbin K.J."/>
            <person name="Egan A."/>
            <person name="Gill R."/>
            <person name="Hume J."/>
            <person name="Morgan M.B."/>
            <person name="Miner G."/>
            <person name="Hamilton C."/>
            <person name="Huang Y."/>
            <person name="Waldron L."/>
            <person name="Verduzco D."/>
            <person name="Clerc-Blankenburg K.P."/>
            <person name="Dubchak I."/>
            <person name="Noor M.A.F."/>
            <person name="Anderson W."/>
            <person name="White K.P."/>
            <person name="Clark A.G."/>
            <person name="Schaeffer S.W."/>
            <person name="Gelbart W.M."/>
            <person name="Weinstock G.M."/>
            <person name="Gibbs R.A."/>
        </authorList>
    </citation>
    <scope>NUCLEOTIDE SEQUENCE [LARGE SCALE GENOMIC DNA]</scope>
    <source>
        <strain>MV2-25 / Tucson 14011-0121.94</strain>
    </source>
</reference>
<keyword id="KW-0496">Mitochondrion</keyword>
<keyword id="KW-1185">Reference proteome</keyword>
<keyword id="KW-0687">Ribonucleoprotein</keyword>
<keyword id="KW-0689">Ribosomal protein</keyword>
<keyword id="KW-0809">Transit peptide</keyword>
<proteinExistence type="inferred from homology"/>
<name>RM24_DROPS</name>
<dbReference type="EMBL" id="CH379060">
    <property type="protein sequence ID" value="EAL33789.1"/>
    <property type="molecule type" value="Genomic_DNA"/>
</dbReference>
<dbReference type="RefSeq" id="XP_001356724.1">
    <property type="nucleotide sequence ID" value="XM_001356688.3"/>
</dbReference>
<dbReference type="SMR" id="Q29MA5"/>
<dbReference type="FunCoup" id="Q29MA5">
    <property type="interactions" value="669"/>
</dbReference>
<dbReference type="STRING" id="46245.Q29MA5"/>
<dbReference type="EnsemblMetazoa" id="FBtr0282179">
    <property type="protein sequence ID" value="FBpp0280617"/>
    <property type="gene ID" value="FBgn0081353"/>
</dbReference>
<dbReference type="GeneID" id="4817158"/>
<dbReference type="KEGG" id="dpo:4817158"/>
<dbReference type="CTD" id="79590"/>
<dbReference type="eggNOG" id="KOG1708">
    <property type="taxonomic scope" value="Eukaryota"/>
</dbReference>
<dbReference type="HOGENOM" id="CLU_093315_0_1_1"/>
<dbReference type="InParanoid" id="Q29MA5"/>
<dbReference type="OMA" id="DFEWRFT"/>
<dbReference type="PhylomeDB" id="Q29MA5"/>
<dbReference type="Proteomes" id="UP000001819">
    <property type="component" value="Chromosome 4"/>
</dbReference>
<dbReference type="Bgee" id="FBgn0081353">
    <property type="expression patterns" value="Expressed in female reproductive system and 2 other cell types or tissues"/>
</dbReference>
<dbReference type="GO" id="GO:0005762">
    <property type="term" value="C:mitochondrial large ribosomal subunit"/>
    <property type="evidence" value="ECO:0000250"/>
    <property type="project" value="UniProtKB"/>
</dbReference>
<dbReference type="GO" id="GO:0003723">
    <property type="term" value="F:RNA binding"/>
    <property type="evidence" value="ECO:0007669"/>
    <property type="project" value="InterPro"/>
</dbReference>
<dbReference type="GO" id="GO:0003735">
    <property type="term" value="F:structural constituent of ribosome"/>
    <property type="evidence" value="ECO:0007669"/>
    <property type="project" value="InterPro"/>
</dbReference>
<dbReference type="GO" id="GO:0006412">
    <property type="term" value="P:translation"/>
    <property type="evidence" value="ECO:0007669"/>
    <property type="project" value="InterPro"/>
</dbReference>
<dbReference type="CDD" id="cd06089">
    <property type="entry name" value="KOW_RPL26"/>
    <property type="match status" value="1"/>
</dbReference>
<dbReference type="FunFam" id="2.30.30.30:FF:000032">
    <property type="entry name" value="39S ribosomal protein L24, mitochondrial"/>
    <property type="match status" value="1"/>
</dbReference>
<dbReference type="Gene3D" id="2.30.30.30">
    <property type="match status" value="1"/>
</dbReference>
<dbReference type="HAMAP" id="MF_01326_B">
    <property type="entry name" value="Ribosomal_uL24_B"/>
    <property type="match status" value="1"/>
</dbReference>
<dbReference type="InterPro" id="IPR005824">
    <property type="entry name" value="KOW"/>
</dbReference>
<dbReference type="InterPro" id="IPR014722">
    <property type="entry name" value="Rib_uL2_dom2"/>
</dbReference>
<dbReference type="InterPro" id="IPR003256">
    <property type="entry name" value="Ribosomal_uL24"/>
</dbReference>
<dbReference type="InterPro" id="IPR005825">
    <property type="entry name" value="Ribosomal_uL24_CS"/>
</dbReference>
<dbReference type="InterPro" id="IPR041988">
    <property type="entry name" value="Ribosomal_uL24_KOW"/>
</dbReference>
<dbReference type="InterPro" id="IPR008991">
    <property type="entry name" value="Translation_prot_SH3-like_sf"/>
</dbReference>
<dbReference type="NCBIfam" id="TIGR01079">
    <property type="entry name" value="rplX_bact"/>
    <property type="match status" value="1"/>
</dbReference>
<dbReference type="PANTHER" id="PTHR12903">
    <property type="entry name" value="MITOCHONDRIAL RIBOSOMAL PROTEIN L24"/>
    <property type="match status" value="1"/>
</dbReference>
<dbReference type="Pfam" id="PF00467">
    <property type="entry name" value="KOW"/>
    <property type="match status" value="1"/>
</dbReference>
<dbReference type="Pfam" id="PF17136">
    <property type="entry name" value="ribosomal_L24"/>
    <property type="match status" value="1"/>
</dbReference>
<dbReference type="SMART" id="SM00739">
    <property type="entry name" value="KOW"/>
    <property type="match status" value="1"/>
</dbReference>
<dbReference type="SUPFAM" id="SSF50104">
    <property type="entry name" value="Translation proteins SH3-like domain"/>
    <property type="match status" value="1"/>
</dbReference>
<dbReference type="PROSITE" id="PS01108">
    <property type="entry name" value="RIBOSOMAL_L24"/>
    <property type="match status" value="1"/>
</dbReference>
<accession>Q29MA5</accession>
<feature type="transit peptide" description="Mitochondrion" evidence="2">
    <location>
        <begin position="1"/>
        <end status="unknown"/>
    </location>
</feature>
<feature type="chain" id="PRO_0000270496" description="Large ribosomal subunit protein uL24m">
    <location>
        <begin status="unknown"/>
        <end position="247"/>
    </location>
</feature>
<feature type="domain" description="KOW">
    <location>
        <begin position="84"/>
        <end position="117"/>
    </location>
</feature>
<comment type="subunit">
    <text evidence="1">Component of the mitochondrial ribosome large subunit (39S) which comprises a 16S rRNA and about 50 distinct proteins.</text>
</comment>
<comment type="subcellular location">
    <subcellularLocation>
        <location evidence="1">Mitochondrion</location>
    </subcellularLocation>
</comment>
<comment type="similarity">
    <text evidence="3">Belongs to the universal ribosomal protein uL24 family.</text>
</comment>
<gene>
    <name type="primary">mRpL24</name>
    <name type="ORF">GA21365</name>
</gene>
<protein>
    <recommendedName>
        <fullName evidence="3">Large ribosomal subunit protein uL24m</fullName>
    </recommendedName>
    <alternativeName>
        <fullName evidence="3">39S ribosomal protein L24, mitochondrial</fullName>
        <shortName>L24mt</shortName>
        <shortName>MRP-L24</shortName>
    </alternativeName>
</protein>
<evidence type="ECO:0000250" key="1">
    <source>
        <dbReference type="UniProtKB" id="Q96A35"/>
    </source>
</evidence>
<evidence type="ECO:0000255" key="2"/>
<evidence type="ECO:0000305" key="3"/>
<sequence>MRITQFLASKLKNFSNLPKEYIERSKKQVYWQTPREKNYLPRTVERKRFRYTTNRPWTGQFRQQNMPATMRRKVLIEPVEDWSFFRGDRIEVLVGKDKGKQGIVTQVIPERNWVIVEGLNWHYRRVGAEKEFPGIIIKSEAPLHVLNDIRLVDPSDLLGTEFEWRFTEEGEKVRVSMRSGRIIPIPETNNQTHDYKTPNAYIEREKDTPAAVVGEITFQPKLSTFEMDIMEEMGIKEERTPAKSYWY</sequence>